<dbReference type="EMBL" id="DP000180">
    <property type="protein sequence ID" value="ABI75306.1"/>
    <property type="molecule type" value="Genomic_DNA"/>
</dbReference>
<dbReference type="RefSeq" id="XP_039328770.1">
    <property type="nucleotide sequence ID" value="XM_039472836.1"/>
</dbReference>
<dbReference type="GlyCosmos" id="Q09YH4">
    <property type="glycosylation" value="1 site, No reported glycans"/>
</dbReference>
<dbReference type="GeneID" id="101037635"/>
<dbReference type="Proteomes" id="UP000233220">
    <property type="component" value="Whole Genome Shotgun Assembly"/>
</dbReference>
<dbReference type="GO" id="GO:0016020">
    <property type="term" value="C:membrane"/>
    <property type="evidence" value="ECO:0007669"/>
    <property type="project" value="UniProtKB-SubCell"/>
</dbReference>
<dbReference type="CDD" id="cd11557">
    <property type="entry name" value="ST7"/>
    <property type="match status" value="1"/>
</dbReference>
<dbReference type="InterPro" id="IPR007311">
    <property type="entry name" value="ST7"/>
</dbReference>
<dbReference type="PANTHER" id="PTHR12745">
    <property type="entry name" value="SUPPRESSION OF TUMORIGENICITY 7"/>
    <property type="match status" value="1"/>
</dbReference>
<dbReference type="PANTHER" id="PTHR12745:SF10">
    <property type="entry name" value="SUPPRESSOR OF TUMORIGENICITY 7 PROTEIN"/>
    <property type="match status" value="1"/>
</dbReference>
<dbReference type="Pfam" id="PF04184">
    <property type="entry name" value="ST7"/>
    <property type="match status" value="1"/>
</dbReference>
<accession>Q09YH4</accession>
<sequence length="585" mass="67152">MAEAGTGFLEQLKSCIVWSWTYLWTVWFFIVLFLVYILRVPLKINDNLSTVSMFLNTLTPKFYVALTGTSSLISGLILIFEWWYFRKYGTSFIEQVSVSHLRPLLGGVDNNSSNNSNSSNGDSDSNRQSVSECKVWRNPLNLFRGAEYNRYTWVTGREPLTYYDMNLSAQDHQTFFTCDSDHLRPADAIMQKAWRERNPQARISAAHEALEINEIRSRVEVPLIASSTIWEIKLLPKCATAYILLAEEEATTIAEAEKLFKQALKAGDGCYRRSQQLQHHGSQYEAQHRRDTNVLVYIKRRLAMCARRLGRTREAVKMMRDLMKEFPLLSMFNIHENLLEALLELQAYADVQAVLAKYDDISLPKSATICYTAALLKARAVSDKFSPEAASRRGLSTAEMNAVEAIHRAVEFNPHVPKYLLEMKSLILPPEHILKRGDSEAIAYAFFHLAHWKRVEGALNLLHCTWEGTFRMIPYPLEKGHLFYPYPICTETADRELLPSFHEVSVYPKKELPFFILFTAGLCSFTAMLALLTHQFPELMGVFAKAMIDIFCSAEFRDWNCKSIFMRVEDELEIPPAPQSQHFQN</sequence>
<comment type="subcellular location">
    <subcellularLocation>
        <location evidence="3">Membrane</location>
        <topology evidence="3">Multi-pass membrane protein</topology>
    </subcellularLocation>
</comment>
<comment type="similarity">
    <text evidence="3">Belongs to the ST7 family.</text>
</comment>
<evidence type="ECO:0000250" key="1">
    <source>
        <dbReference type="UniProtKB" id="Q9NRC1"/>
    </source>
</evidence>
<evidence type="ECO:0000255" key="2"/>
<evidence type="ECO:0000305" key="3"/>
<name>ST7_SAIBB</name>
<gene>
    <name type="primary">ST7</name>
</gene>
<protein>
    <recommendedName>
        <fullName>Suppressor of tumorigenicity 7 protein</fullName>
    </recommendedName>
</protein>
<feature type="chain" id="PRO_0000339217" description="Suppressor of tumorigenicity 7 protein">
    <location>
        <begin position="1"/>
        <end position="585"/>
    </location>
</feature>
<feature type="transmembrane region" description="Helical" evidence="2">
    <location>
        <begin position="15"/>
        <end position="35"/>
    </location>
</feature>
<feature type="transmembrane region" description="Helical" evidence="2">
    <location>
        <begin position="62"/>
        <end position="82"/>
    </location>
</feature>
<feature type="transmembrane region" description="Helical" evidence="2">
    <location>
        <begin position="512"/>
        <end position="532"/>
    </location>
</feature>
<feature type="modified residue" description="Phosphoserine" evidence="1">
    <location>
        <position position="386"/>
    </location>
</feature>
<feature type="glycosylation site" description="N-linked (GlcNAc...) asparagine" evidence="2">
    <location>
        <position position="47"/>
    </location>
</feature>
<organism>
    <name type="scientific">Saimiri boliviensis boliviensis</name>
    <name type="common">Bolivian squirrel monkey</name>
    <dbReference type="NCBI Taxonomy" id="39432"/>
    <lineage>
        <taxon>Eukaryota</taxon>
        <taxon>Metazoa</taxon>
        <taxon>Chordata</taxon>
        <taxon>Craniata</taxon>
        <taxon>Vertebrata</taxon>
        <taxon>Euteleostomi</taxon>
        <taxon>Mammalia</taxon>
        <taxon>Eutheria</taxon>
        <taxon>Euarchontoglires</taxon>
        <taxon>Primates</taxon>
        <taxon>Haplorrhini</taxon>
        <taxon>Platyrrhini</taxon>
        <taxon>Cebidae</taxon>
        <taxon>Saimiriinae</taxon>
        <taxon>Saimiri</taxon>
    </lineage>
</organism>
<proteinExistence type="inferred from homology"/>
<reference key="1">
    <citation type="submission" date="2006-09" db="EMBL/GenBank/DDBJ databases">
        <title>NISC comparative sequencing initiative.</title>
        <authorList>
            <person name="Antonellis A."/>
            <person name="Ayele K."/>
            <person name="Benjamin B."/>
            <person name="Blakesley R.W."/>
            <person name="Boakye A."/>
            <person name="Bouffard G.G."/>
            <person name="Brinkley C."/>
            <person name="Brooks S."/>
            <person name="Chu G."/>
            <person name="Coleman H."/>
            <person name="Engle J."/>
            <person name="Gestole M."/>
            <person name="Greene A."/>
            <person name="Guan X."/>
            <person name="Gupta J."/>
            <person name="Haghighi P."/>
            <person name="Han J."/>
            <person name="Hansen N."/>
            <person name="Ho S.-L."/>
            <person name="Hu P."/>
            <person name="Hunter G."/>
            <person name="Hurle B."/>
            <person name="Idol J.R."/>
            <person name="Kwong P."/>
            <person name="Laric P."/>
            <person name="Larson S."/>
            <person name="Lee-Lin S.-Q."/>
            <person name="Legaspi R."/>
            <person name="Madden M."/>
            <person name="Maduro Q.L."/>
            <person name="Maduro V.B."/>
            <person name="Margulies E.H."/>
            <person name="Masiello C."/>
            <person name="Maskeri B."/>
            <person name="McDowell J."/>
            <person name="Mojidi H.A."/>
            <person name="Mullikin J.C."/>
            <person name="Oestreicher J.S."/>
            <person name="Park M."/>
            <person name="Portnoy M.E."/>
            <person name="Prasad A."/>
            <person name="Puri O."/>
            <person name="Reddix-Dugue N."/>
            <person name="Schandler K."/>
            <person name="Schueler M.G."/>
            <person name="Sison C."/>
            <person name="Stantripop S."/>
            <person name="Stephen E."/>
            <person name="Taye A."/>
            <person name="Thomas J.W."/>
            <person name="Thomas P.J."/>
            <person name="Tsipouri V."/>
            <person name="Ung L."/>
            <person name="Vogt J.L."/>
            <person name="Wetherby K.D."/>
            <person name="Young A."/>
            <person name="Green E.D."/>
        </authorList>
    </citation>
    <scope>NUCLEOTIDE SEQUENCE [LARGE SCALE GENOMIC DNA]</scope>
</reference>
<keyword id="KW-0325">Glycoprotein</keyword>
<keyword id="KW-0472">Membrane</keyword>
<keyword id="KW-0597">Phosphoprotein</keyword>
<keyword id="KW-1185">Reference proteome</keyword>
<keyword id="KW-0812">Transmembrane</keyword>
<keyword id="KW-1133">Transmembrane helix</keyword>